<evidence type="ECO:0000255" key="1">
    <source>
        <dbReference type="HAMAP-Rule" id="MF_00073"/>
    </source>
</evidence>
<evidence type="ECO:0000305" key="2"/>
<comment type="function">
    <text evidence="1">Involved in transcription antitermination. Required for transcription of ribosomal RNA (rRNA) genes. Binds specifically to the boxA antiterminator sequence of the ribosomal RNA (rrn) operons.</text>
</comment>
<comment type="similarity">
    <text evidence="1 2">Belongs to the NusB family.</text>
</comment>
<accession>Q8RII1</accession>
<dbReference type="EMBL" id="AE009951">
    <property type="protein sequence ID" value="AAL93731.1"/>
    <property type="molecule type" value="Genomic_DNA"/>
</dbReference>
<dbReference type="RefSeq" id="NP_602432.1">
    <property type="nucleotide sequence ID" value="NC_003454.1"/>
</dbReference>
<dbReference type="RefSeq" id="WP_005904113.1">
    <property type="nucleotide sequence ID" value="NZ_OZ209243.1"/>
</dbReference>
<dbReference type="SMR" id="Q8RII1"/>
<dbReference type="FunCoup" id="Q8RII1">
    <property type="interactions" value="241"/>
</dbReference>
<dbReference type="STRING" id="190304.FN1616"/>
<dbReference type="PaxDb" id="190304-FN1616"/>
<dbReference type="EnsemblBacteria" id="AAL93731">
    <property type="protein sequence ID" value="AAL93731"/>
    <property type="gene ID" value="FN1616"/>
</dbReference>
<dbReference type="GeneID" id="79782555"/>
<dbReference type="KEGG" id="fnu:FN1616"/>
<dbReference type="PATRIC" id="fig|190304.8.peg.109"/>
<dbReference type="eggNOG" id="COG0781">
    <property type="taxonomic scope" value="Bacteria"/>
</dbReference>
<dbReference type="HOGENOM" id="CLU_087843_3_3_0"/>
<dbReference type="InParanoid" id="Q8RII1"/>
<dbReference type="BioCyc" id="FNUC190304:G1FZS-119-MONOMER"/>
<dbReference type="Proteomes" id="UP000002521">
    <property type="component" value="Chromosome"/>
</dbReference>
<dbReference type="GO" id="GO:0005829">
    <property type="term" value="C:cytosol"/>
    <property type="evidence" value="ECO:0000318"/>
    <property type="project" value="GO_Central"/>
</dbReference>
<dbReference type="GO" id="GO:0003723">
    <property type="term" value="F:RNA binding"/>
    <property type="evidence" value="ECO:0007669"/>
    <property type="project" value="UniProtKB-UniRule"/>
</dbReference>
<dbReference type="GO" id="GO:0006353">
    <property type="term" value="P:DNA-templated transcription termination"/>
    <property type="evidence" value="ECO:0007669"/>
    <property type="project" value="UniProtKB-UniRule"/>
</dbReference>
<dbReference type="GO" id="GO:0031564">
    <property type="term" value="P:transcription antitermination"/>
    <property type="evidence" value="ECO:0007669"/>
    <property type="project" value="UniProtKB-KW"/>
</dbReference>
<dbReference type="Gene3D" id="1.10.940.10">
    <property type="entry name" value="NusB-like"/>
    <property type="match status" value="1"/>
</dbReference>
<dbReference type="HAMAP" id="MF_00073">
    <property type="entry name" value="NusB"/>
    <property type="match status" value="1"/>
</dbReference>
<dbReference type="InterPro" id="IPR035926">
    <property type="entry name" value="NusB-like_sf"/>
</dbReference>
<dbReference type="InterPro" id="IPR011605">
    <property type="entry name" value="NusB_fam"/>
</dbReference>
<dbReference type="InterPro" id="IPR006027">
    <property type="entry name" value="NusB_RsmB_TIM44"/>
</dbReference>
<dbReference type="NCBIfam" id="TIGR01951">
    <property type="entry name" value="nusB"/>
    <property type="match status" value="1"/>
</dbReference>
<dbReference type="PANTHER" id="PTHR11078:SF3">
    <property type="entry name" value="ANTITERMINATION NUSB DOMAIN-CONTAINING PROTEIN"/>
    <property type="match status" value="1"/>
</dbReference>
<dbReference type="PANTHER" id="PTHR11078">
    <property type="entry name" value="N UTILIZATION SUBSTANCE PROTEIN B-RELATED"/>
    <property type="match status" value="1"/>
</dbReference>
<dbReference type="Pfam" id="PF01029">
    <property type="entry name" value="NusB"/>
    <property type="match status" value="1"/>
</dbReference>
<dbReference type="SUPFAM" id="SSF48013">
    <property type="entry name" value="NusB-like"/>
    <property type="match status" value="1"/>
</dbReference>
<reference key="1">
    <citation type="journal article" date="2002" name="J. Bacteriol.">
        <title>Genome sequence and analysis of the oral bacterium Fusobacterium nucleatum strain ATCC 25586.</title>
        <authorList>
            <person name="Kapatral V."/>
            <person name="Anderson I."/>
            <person name="Ivanova N."/>
            <person name="Reznik G."/>
            <person name="Los T."/>
            <person name="Lykidis A."/>
            <person name="Bhattacharyya A."/>
            <person name="Bartman A."/>
            <person name="Gardner W."/>
            <person name="Grechkin G."/>
            <person name="Zhu L."/>
            <person name="Vasieva O."/>
            <person name="Chu L."/>
            <person name="Kogan Y."/>
            <person name="Chaga O."/>
            <person name="Goltsman E."/>
            <person name="Bernal A."/>
            <person name="Larsen N."/>
            <person name="D'Souza M."/>
            <person name="Walunas T."/>
            <person name="Pusch G."/>
            <person name="Haselkorn R."/>
            <person name="Fonstein M."/>
            <person name="Kyrpides N.C."/>
            <person name="Overbeek R."/>
        </authorList>
    </citation>
    <scope>NUCLEOTIDE SEQUENCE [LARGE SCALE GENOMIC DNA]</scope>
    <source>
        <strain>ATCC 25586 / DSM 15643 / BCRC 10681 / CIP 101130 / JCM 8532 / KCTC 2640 / LMG 13131 / VPI 4355</strain>
    </source>
</reference>
<protein>
    <recommendedName>
        <fullName evidence="1">Transcription antitermination protein NusB</fullName>
    </recommendedName>
    <alternativeName>
        <fullName evidence="1">Antitermination factor NusB</fullName>
    </alternativeName>
</protein>
<keyword id="KW-1185">Reference proteome</keyword>
<keyword id="KW-0694">RNA-binding</keyword>
<keyword id="KW-0804">Transcription</keyword>
<keyword id="KW-0889">Transcription antitermination</keyword>
<keyword id="KW-0805">Transcription regulation</keyword>
<name>NUSB_FUSNN</name>
<organism>
    <name type="scientific">Fusobacterium nucleatum subsp. nucleatum (strain ATCC 25586 / DSM 15643 / BCRC 10681 / CIP 101130 / JCM 8532 / KCTC 2640 / LMG 13131 / VPI 4355)</name>
    <dbReference type="NCBI Taxonomy" id="190304"/>
    <lineage>
        <taxon>Bacteria</taxon>
        <taxon>Fusobacteriati</taxon>
        <taxon>Fusobacteriota</taxon>
        <taxon>Fusobacteriia</taxon>
        <taxon>Fusobacteriales</taxon>
        <taxon>Fusobacteriaceae</taxon>
        <taxon>Fusobacterium</taxon>
    </lineage>
</organism>
<gene>
    <name evidence="1" type="primary">nusB</name>
    <name type="ordered locus">FN1616</name>
</gene>
<sequence length="153" mass="17516">MNKNFEEQEKKAKGGVRLAREEVFKLVFGVEATESASEELKQAFDIYLQNSEELIGTLNENQLEFLKSSIDGIAKNYDNIKDIIKKNTQNWAYERIGVVERALLIVATYEFIFKNAPIEVIANEIIELAKEYGNEKSYEFVNGILANIEKSKK</sequence>
<feature type="chain" id="PRO_0000176540" description="Transcription antitermination protein NusB">
    <location>
        <begin position="1"/>
        <end position="153"/>
    </location>
</feature>
<proteinExistence type="inferred from homology"/>